<sequence>MPAYRPPHIASSEITPKSFYLSRRNFLGTAAGLAAIGLAGREAIAAPLSAKPGAYKLDEKLTPLDAVTSYNNFYEFGVGKSDPKENSGKFKPTPWTVKVDGLVSKPQEFGIEELMKYPLEERTYRMRCVEGWSMVIPWIGFPLSALLDKVEPLGSAKYVSFETVVRPEEMPGQSGLFQPLSWPYVEGLRLDEARHPLTILAVGLYGETLPNQNGAPIRLVVPWKYGFKGIKSIMRISLVEKQPETTWKNSNAREYGFYSNVNPHVDHPRWSQATEQRIGEGGFFGTQNRPTLMFNGYDDVASLYTGLDLKANY</sequence>
<protein>
    <recommendedName>
        <fullName evidence="1">Protein-methionine-sulfoxide reductase catalytic subunit MsrP</fullName>
        <ecNumber evidence="1">1.8.5.-</ecNumber>
    </recommendedName>
</protein>
<reference key="1">
    <citation type="journal article" date="2001" name="Science">
        <title>The genome of the natural genetic engineer Agrobacterium tumefaciens C58.</title>
        <authorList>
            <person name="Wood D.W."/>
            <person name="Setubal J.C."/>
            <person name="Kaul R."/>
            <person name="Monks D.E."/>
            <person name="Kitajima J.P."/>
            <person name="Okura V.K."/>
            <person name="Zhou Y."/>
            <person name="Chen L."/>
            <person name="Wood G.E."/>
            <person name="Almeida N.F. Jr."/>
            <person name="Woo L."/>
            <person name="Chen Y."/>
            <person name="Paulsen I.T."/>
            <person name="Eisen J.A."/>
            <person name="Karp P.D."/>
            <person name="Bovee D. Sr."/>
            <person name="Chapman P."/>
            <person name="Clendenning J."/>
            <person name="Deatherage G."/>
            <person name="Gillet W."/>
            <person name="Grant C."/>
            <person name="Kutyavin T."/>
            <person name="Levy R."/>
            <person name="Li M.-J."/>
            <person name="McClelland E."/>
            <person name="Palmieri A."/>
            <person name="Raymond C."/>
            <person name="Rouse G."/>
            <person name="Saenphimmachak C."/>
            <person name="Wu Z."/>
            <person name="Romero P."/>
            <person name="Gordon D."/>
            <person name="Zhang S."/>
            <person name="Yoo H."/>
            <person name="Tao Y."/>
            <person name="Biddle P."/>
            <person name="Jung M."/>
            <person name="Krespan W."/>
            <person name="Perry M."/>
            <person name="Gordon-Kamm B."/>
            <person name="Liao L."/>
            <person name="Kim S."/>
            <person name="Hendrick C."/>
            <person name="Zhao Z.-Y."/>
            <person name="Dolan M."/>
            <person name="Chumley F."/>
            <person name="Tingey S.V."/>
            <person name="Tomb J.-F."/>
            <person name="Gordon M.P."/>
            <person name="Olson M.V."/>
            <person name="Nester E.W."/>
        </authorList>
    </citation>
    <scope>NUCLEOTIDE SEQUENCE [LARGE SCALE GENOMIC DNA]</scope>
    <source>
        <strain>C58 / ATCC 33970</strain>
    </source>
</reference>
<reference key="2">
    <citation type="journal article" date="2001" name="Science">
        <title>Genome sequence of the plant pathogen and biotechnology agent Agrobacterium tumefaciens C58.</title>
        <authorList>
            <person name="Goodner B."/>
            <person name="Hinkle G."/>
            <person name="Gattung S."/>
            <person name="Miller N."/>
            <person name="Blanchard M."/>
            <person name="Qurollo B."/>
            <person name="Goldman B.S."/>
            <person name="Cao Y."/>
            <person name="Askenazi M."/>
            <person name="Halling C."/>
            <person name="Mullin L."/>
            <person name="Houmiel K."/>
            <person name="Gordon J."/>
            <person name="Vaudin M."/>
            <person name="Iartchouk O."/>
            <person name="Epp A."/>
            <person name="Liu F."/>
            <person name="Wollam C."/>
            <person name="Allinger M."/>
            <person name="Doughty D."/>
            <person name="Scott C."/>
            <person name="Lappas C."/>
            <person name="Markelz B."/>
            <person name="Flanagan C."/>
            <person name="Crowell C."/>
            <person name="Gurson J."/>
            <person name="Lomo C."/>
            <person name="Sear C."/>
            <person name="Strub G."/>
            <person name="Cielo C."/>
            <person name="Slater S."/>
        </authorList>
    </citation>
    <scope>NUCLEOTIDE SEQUENCE [LARGE SCALE GENOMIC DNA]</scope>
    <source>
        <strain>C58 / ATCC 33970</strain>
    </source>
</reference>
<accession>P58770</accession>
<organism>
    <name type="scientific">Agrobacterium fabrum (strain C58 / ATCC 33970)</name>
    <name type="common">Agrobacterium tumefaciens (strain C58)</name>
    <dbReference type="NCBI Taxonomy" id="176299"/>
    <lineage>
        <taxon>Bacteria</taxon>
        <taxon>Pseudomonadati</taxon>
        <taxon>Pseudomonadota</taxon>
        <taxon>Alphaproteobacteria</taxon>
        <taxon>Hyphomicrobiales</taxon>
        <taxon>Rhizobiaceae</taxon>
        <taxon>Rhizobium/Agrobacterium group</taxon>
        <taxon>Agrobacterium</taxon>
        <taxon>Agrobacterium tumefaciens complex</taxon>
    </lineage>
</organism>
<dbReference type="EC" id="1.8.5.-" evidence="1"/>
<dbReference type="EMBL" id="AE007869">
    <property type="protein sequence ID" value="AAK87679.2"/>
    <property type="molecule type" value="Genomic_DNA"/>
</dbReference>
<dbReference type="PIR" id="AE2812">
    <property type="entry name" value="AE2812"/>
</dbReference>
<dbReference type="PIR" id="F97590">
    <property type="entry name" value="F97590"/>
</dbReference>
<dbReference type="RefSeq" id="NP_354894.2">
    <property type="nucleotide sequence ID" value="NC_003062.2"/>
</dbReference>
<dbReference type="RefSeq" id="WP_010971960.1">
    <property type="nucleotide sequence ID" value="NC_003062.2"/>
</dbReference>
<dbReference type="SMR" id="P58770"/>
<dbReference type="STRING" id="176299.Atu1919"/>
<dbReference type="EnsemblBacteria" id="AAK87679">
    <property type="protein sequence ID" value="AAK87679"/>
    <property type="gene ID" value="Atu1919"/>
</dbReference>
<dbReference type="GeneID" id="1133957"/>
<dbReference type="KEGG" id="atu:Atu1919"/>
<dbReference type="PATRIC" id="fig|176299.10.peg.1929"/>
<dbReference type="eggNOG" id="COG2041">
    <property type="taxonomic scope" value="Bacteria"/>
</dbReference>
<dbReference type="HOGENOM" id="CLU_045520_0_0_5"/>
<dbReference type="OrthoDB" id="9795587at2"/>
<dbReference type="PhylomeDB" id="P58770"/>
<dbReference type="BioCyc" id="AGRO:ATU1919-MONOMER"/>
<dbReference type="Proteomes" id="UP000000813">
    <property type="component" value="Chromosome circular"/>
</dbReference>
<dbReference type="GO" id="GO:0042597">
    <property type="term" value="C:periplasmic space"/>
    <property type="evidence" value="ECO:0007669"/>
    <property type="project" value="UniProtKB-SubCell"/>
</dbReference>
<dbReference type="GO" id="GO:0046872">
    <property type="term" value="F:metal ion binding"/>
    <property type="evidence" value="ECO:0007669"/>
    <property type="project" value="UniProtKB-KW"/>
</dbReference>
<dbReference type="GO" id="GO:0043546">
    <property type="term" value="F:molybdopterin cofactor binding"/>
    <property type="evidence" value="ECO:0007669"/>
    <property type="project" value="UniProtKB-UniRule"/>
</dbReference>
<dbReference type="GO" id="GO:0016672">
    <property type="term" value="F:oxidoreductase activity, acting on a sulfur group of donors, quinone or similar compound as acceptor"/>
    <property type="evidence" value="ECO:0007669"/>
    <property type="project" value="UniProtKB-UniRule"/>
</dbReference>
<dbReference type="GO" id="GO:0030091">
    <property type="term" value="P:protein repair"/>
    <property type="evidence" value="ECO:0007669"/>
    <property type="project" value="UniProtKB-UniRule"/>
</dbReference>
<dbReference type="CDD" id="cd02107">
    <property type="entry name" value="YedY_like_Moco"/>
    <property type="match status" value="1"/>
</dbReference>
<dbReference type="Gene3D" id="3.90.420.10">
    <property type="entry name" value="Oxidoreductase, molybdopterin-binding domain"/>
    <property type="match status" value="1"/>
</dbReference>
<dbReference type="HAMAP" id="MF_01206">
    <property type="entry name" value="MsrP"/>
    <property type="match status" value="1"/>
</dbReference>
<dbReference type="InterPro" id="IPR022867">
    <property type="entry name" value="MsrP"/>
</dbReference>
<dbReference type="InterPro" id="IPR000572">
    <property type="entry name" value="OxRdtase_Mopterin-bd_dom"/>
</dbReference>
<dbReference type="InterPro" id="IPR036374">
    <property type="entry name" value="OxRdtase_Mopterin-bd_sf"/>
</dbReference>
<dbReference type="InterPro" id="IPR006311">
    <property type="entry name" value="TAT_signal"/>
</dbReference>
<dbReference type="NCBIfam" id="NF003767">
    <property type="entry name" value="PRK05363.1"/>
    <property type="match status" value="1"/>
</dbReference>
<dbReference type="PANTHER" id="PTHR43032">
    <property type="entry name" value="PROTEIN-METHIONINE-SULFOXIDE REDUCTASE"/>
    <property type="match status" value="1"/>
</dbReference>
<dbReference type="PANTHER" id="PTHR43032:SF3">
    <property type="entry name" value="PROTEIN-METHIONINE-SULFOXIDE REDUCTASE CATALYTIC SUBUNIT MSRP"/>
    <property type="match status" value="1"/>
</dbReference>
<dbReference type="Pfam" id="PF00174">
    <property type="entry name" value="Oxidored_molyb"/>
    <property type="match status" value="1"/>
</dbReference>
<dbReference type="SUPFAM" id="SSF56524">
    <property type="entry name" value="Oxidoreductase molybdopterin-binding domain"/>
    <property type="match status" value="1"/>
</dbReference>
<dbReference type="PROSITE" id="PS51318">
    <property type="entry name" value="TAT"/>
    <property type="match status" value="1"/>
</dbReference>
<name>MSRP_AGRFC</name>
<feature type="signal peptide" description="Tat-type signal" evidence="1">
    <location>
        <begin position="1"/>
        <end position="45"/>
    </location>
</feature>
<feature type="chain" id="PRO_0000070675" description="Protein-methionine-sulfoxide reductase catalytic subunit MsrP" evidence="1">
    <location>
        <begin position="46"/>
        <end position="313"/>
    </location>
</feature>
<feature type="binding site" evidence="1">
    <location>
        <position position="71"/>
    </location>
    <ligand>
        <name>Mo-molybdopterin</name>
        <dbReference type="ChEBI" id="CHEBI:71302"/>
    </ligand>
</feature>
<feature type="binding site" evidence="1">
    <location>
        <begin position="74"/>
        <end position="75"/>
    </location>
    <ligand>
        <name>Mo-molybdopterin</name>
        <dbReference type="ChEBI" id="CHEBI:71302"/>
    </ligand>
</feature>
<feature type="binding site" evidence="1">
    <location>
        <position position="128"/>
    </location>
    <ligand>
        <name>Mo-molybdopterin</name>
        <dbReference type="ChEBI" id="CHEBI:71302"/>
    </ligand>
    <ligandPart>
        <name>Mo</name>
        <dbReference type="ChEBI" id="CHEBI:28685"/>
    </ligandPart>
</feature>
<feature type="binding site" evidence="1">
    <location>
        <position position="163"/>
    </location>
    <ligand>
        <name>Mo-molybdopterin</name>
        <dbReference type="ChEBI" id="CHEBI:71302"/>
    </ligand>
</feature>
<feature type="binding site" evidence="1">
    <location>
        <position position="213"/>
    </location>
    <ligand>
        <name>Mo-molybdopterin</name>
        <dbReference type="ChEBI" id="CHEBI:71302"/>
    </ligand>
</feature>
<feature type="binding site" evidence="1">
    <location>
        <position position="218"/>
    </location>
    <ligand>
        <name>Mo-molybdopterin</name>
        <dbReference type="ChEBI" id="CHEBI:71302"/>
    </ligand>
</feature>
<feature type="binding site" evidence="1">
    <location>
        <begin position="229"/>
        <end position="231"/>
    </location>
    <ligand>
        <name>Mo-molybdopterin</name>
        <dbReference type="ChEBI" id="CHEBI:71302"/>
    </ligand>
</feature>
<keyword id="KW-0479">Metal-binding</keyword>
<keyword id="KW-0500">Molybdenum</keyword>
<keyword id="KW-0560">Oxidoreductase</keyword>
<keyword id="KW-0574">Periplasm</keyword>
<keyword id="KW-1185">Reference proteome</keyword>
<keyword id="KW-0732">Signal</keyword>
<comment type="function">
    <text evidence="1">Part of the MsrPQ system that repairs oxidized periplasmic proteins containing methionine sulfoxide residues (Met-O), using respiratory chain electrons. Thus protects these proteins from oxidative-stress damage caused by reactive species of oxygen and chlorine generated by the host defense mechanisms. MsrPQ is essential for the maintenance of envelope integrity under bleach stress, rescuing a wide series of structurally unrelated periplasmic proteins from methionine oxidation. The catalytic subunit MsrP is non-stereospecific, being able to reduce both (R-) and (S-) diastereoisomers of methionine sulfoxide.</text>
</comment>
<comment type="catalytic activity">
    <reaction evidence="1">
        <text>L-methionyl-[protein] + a quinone + H2O = L-methionyl-(S)-S-oxide-[protein] + a quinol</text>
        <dbReference type="Rhea" id="RHEA:51292"/>
        <dbReference type="Rhea" id="RHEA-COMP:12313"/>
        <dbReference type="Rhea" id="RHEA-COMP:12315"/>
        <dbReference type="ChEBI" id="CHEBI:15377"/>
        <dbReference type="ChEBI" id="CHEBI:16044"/>
        <dbReference type="ChEBI" id="CHEBI:24646"/>
        <dbReference type="ChEBI" id="CHEBI:44120"/>
        <dbReference type="ChEBI" id="CHEBI:132124"/>
    </reaction>
</comment>
<comment type="catalytic activity">
    <reaction evidence="1">
        <text>L-methionyl-[protein] + a quinone + H2O = L-methionyl-(R)-S-oxide-[protein] + a quinol</text>
        <dbReference type="Rhea" id="RHEA:51296"/>
        <dbReference type="Rhea" id="RHEA-COMP:12313"/>
        <dbReference type="Rhea" id="RHEA-COMP:12314"/>
        <dbReference type="ChEBI" id="CHEBI:15377"/>
        <dbReference type="ChEBI" id="CHEBI:16044"/>
        <dbReference type="ChEBI" id="CHEBI:24646"/>
        <dbReference type="ChEBI" id="CHEBI:45764"/>
        <dbReference type="ChEBI" id="CHEBI:132124"/>
    </reaction>
</comment>
<comment type="cofactor">
    <cofactor evidence="1">
        <name>Mo-molybdopterin</name>
        <dbReference type="ChEBI" id="CHEBI:71302"/>
    </cofactor>
    <text evidence="1">Binds 1 Mo-molybdopterin (Mo-MPT) cofactor per subunit.</text>
</comment>
<comment type="subunit">
    <text evidence="1">Heterodimer of a catalytic subunit (MsrP) and a heme-binding subunit (MsrQ).</text>
</comment>
<comment type="subcellular location">
    <subcellularLocation>
        <location evidence="1">Periplasm</location>
    </subcellularLocation>
    <text evidence="1">Is attached to the inner membrane when interacting with the MsrQ subunit.</text>
</comment>
<comment type="PTM">
    <text evidence="1">Predicted to be exported by the Tat system. The position of the signal peptide cleavage has not been experimentally proven.</text>
</comment>
<comment type="similarity">
    <text evidence="1">Belongs to the MsrP family.</text>
</comment>
<gene>
    <name evidence="1" type="primary">msrP</name>
    <name type="ordered locus">Atu1919</name>
    <name type="ORF">AGR_C_3511</name>
</gene>
<evidence type="ECO:0000255" key="1">
    <source>
        <dbReference type="HAMAP-Rule" id="MF_01206"/>
    </source>
</evidence>
<proteinExistence type="inferred from homology"/>